<dbReference type="EMBL" id="CM000128">
    <property type="protein sequence ID" value="EEC76419.1"/>
    <property type="molecule type" value="Genomic_DNA"/>
</dbReference>
<dbReference type="SMR" id="B8AMA9"/>
<dbReference type="STRING" id="39946.B8AMA9"/>
<dbReference type="EnsemblPlants" id="BGIOSGA013826-TA">
    <property type="protein sequence ID" value="BGIOSGA013826-PA"/>
    <property type="gene ID" value="BGIOSGA013826"/>
</dbReference>
<dbReference type="EnsemblPlants" id="OsPr106_03g0039370.01">
    <property type="protein sequence ID" value="OsPr106_03g0039370.01"/>
    <property type="gene ID" value="OsPr106_03g0039370"/>
</dbReference>
<dbReference type="Gramene" id="BGIOSGA013826-TA">
    <property type="protein sequence ID" value="BGIOSGA013826-PA"/>
    <property type="gene ID" value="BGIOSGA013826"/>
</dbReference>
<dbReference type="Gramene" id="OsPr106_03g0039370.01">
    <property type="protein sequence ID" value="OsPr106_03g0039370.01"/>
    <property type="gene ID" value="OsPr106_03g0039370"/>
</dbReference>
<dbReference type="HOGENOM" id="CLU_035462_0_0_1"/>
<dbReference type="OMA" id="SGFMTRQ"/>
<dbReference type="Proteomes" id="UP000007015">
    <property type="component" value="Chromosome 3"/>
</dbReference>
<dbReference type="GO" id="GO:0005634">
    <property type="term" value="C:nucleus"/>
    <property type="evidence" value="ECO:0007669"/>
    <property type="project" value="UniProtKB-SubCell"/>
</dbReference>
<dbReference type="GO" id="GO:0003677">
    <property type="term" value="F:DNA binding"/>
    <property type="evidence" value="ECO:0007669"/>
    <property type="project" value="UniProtKB-KW"/>
</dbReference>
<dbReference type="GO" id="GO:0003700">
    <property type="term" value="F:DNA-binding transcription factor activity"/>
    <property type="evidence" value="ECO:0007669"/>
    <property type="project" value="InterPro"/>
</dbReference>
<dbReference type="GO" id="GO:0009909">
    <property type="term" value="P:regulation of flower development"/>
    <property type="evidence" value="ECO:0007669"/>
    <property type="project" value="EnsemblPlants"/>
</dbReference>
<dbReference type="GO" id="GO:0080050">
    <property type="term" value="P:regulation of seed development"/>
    <property type="evidence" value="ECO:0007669"/>
    <property type="project" value="EnsemblPlants"/>
</dbReference>
<dbReference type="GO" id="GO:0010228">
    <property type="term" value="P:vegetative to reproductive phase transition of meristem"/>
    <property type="evidence" value="ECO:0007669"/>
    <property type="project" value="EnsemblPlants"/>
</dbReference>
<dbReference type="CDD" id="cd00018">
    <property type="entry name" value="AP2"/>
    <property type="match status" value="2"/>
</dbReference>
<dbReference type="FunFam" id="3.30.730.10:FF:000002">
    <property type="entry name" value="AP2-like ethylene-responsive transcription factor"/>
    <property type="match status" value="1"/>
</dbReference>
<dbReference type="FunFam" id="3.30.730.10:FF:000004">
    <property type="entry name" value="AP2-like ethylene-responsive transcription factor"/>
    <property type="match status" value="1"/>
</dbReference>
<dbReference type="Gene3D" id="3.30.730.10">
    <property type="entry name" value="AP2/ERF domain"/>
    <property type="match status" value="2"/>
</dbReference>
<dbReference type="InterPro" id="IPR001471">
    <property type="entry name" value="AP2/ERF_dom"/>
</dbReference>
<dbReference type="InterPro" id="IPR036955">
    <property type="entry name" value="AP2/ERF_dom_sf"/>
</dbReference>
<dbReference type="InterPro" id="IPR016177">
    <property type="entry name" value="DNA-bd_dom_sf"/>
</dbReference>
<dbReference type="PANTHER" id="PTHR32467">
    <property type="entry name" value="AP2-LIKE ETHYLENE-RESPONSIVE TRANSCRIPTION FACTOR"/>
    <property type="match status" value="1"/>
</dbReference>
<dbReference type="PANTHER" id="PTHR32467:SF67">
    <property type="entry name" value="OS03G0818800 PROTEIN"/>
    <property type="match status" value="1"/>
</dbReference>
<dbReference type="Pfam" id="PF00847">
    <property type="entry name" value="AP2"/>
    <property type="match status" value="2"/>
</dbReference>
<dbReference type="PRINTS" id="PR00367">
    <property type="entry name" value="ETHRSPELEMNT"/>
</dbReference>
<dbReference type="SMART" id="SM00380">
    <property type="entry name" value="AP2"/>
    <property type="match status" value="2"/>
</dbReference>
<dbReference type="SUPFAM" id="SSF54171">
    <property type="entry name" value="DNA-binding domain"/>
    <property type="match status" value="2"/>
</dbReference>
<dbReference type="PROSITE" id="PS51032">
    <property type="entry name" value="AP2_ERF"/>
    <property type="match status" value="2"/>
</dbReference>
<feature type="chain" id="PRO_0000445990" description="APETALA2-like protein 2">
    <location>
        <begin position="1"/>
        <end position="434"/>
    </location>
</feature>
<feature type="DNA-binding region" description="AP2/ERF 1" evidence="4">
    <location>
        <begin position="118"/>
        <end position="174"/>
    </location>
</feature>
<feature type="DNA-binding region" description="AP2/ERF 2" evidence="4">
    <location>
        <begin position="210"/>
        <end position="267"/>
    </location>
</feature>
<feature type="region of interest" description="Disordered" evidence="5">
    <location>
        <begin position="1"/>
        <end position="116"/>
    </location>
</feature>
<feature type="short sequence motif" description="Nuclear localization signal" evidence="3">
    <location>
        <begin position="106"/>
        <end position="115"/>
    </location>
</feature>
<feature type="short sequence motif" description="EAR" evidence="1">
    <location>
        <begin position="291"/>
        <end position="295"/>
    </location>
</feature>
<feature type="compositionally biased region" description="Low complexity" evidence="5">
    <location>
        <begin position="12"/>
        <end position="23"/>
    </location>
</feature>
<feature type="compositionally biased region" description="Gly residues" evidence="5">
    <location>
        <begin position="25"/>
        <end position="38"/>
    </location>
</feature>
<feature type="compositionally biased region" description="Pro residues" evidence="5">
    <location>
        <begin position="72"/>
        <end position="87"/>
    </location>
</feature>
<feature type="compositionally biased region" description="Basic residues" evidence="5">
    <location>
        <begin position="104"/>
        <end position="113"/>
    </location>
</feature>
<protein>
    <recommendedName>
        <fullName evidence="6">APETALA2-like protein 2</fullName>
    </recommendedName>
</protein>
<organism>
    <name type="scientific">Oryza sativa subsp. indica</name>
    <name type="common">Rice</name>
    <dbReference type="NCBI Taxonomy" id="39946"/>
    <lineage>
        <taxon>Eukaryota</taxon>
        <taxon>Viridiplantae</taxon>
        <taxon>Streptophyta</taxon>
        <taxon>Embryophyta</taxon>
        <taxon>Tracheophyta</taxon>
        <taxon>Spermatophyta</taxon>
        <taxon>Magnoliopsida</taxon>
        <taxon>Liliopsida</taxon>
        <taxon>Poales</taxon>
        <taxon>Poaceae</taxon>
        <taxon>BOP clade</taxon>
        <taxon>Oryzoideae</taxon>
        <taxon>Oryzeae</taxon>
        <taxon>Oryzinae</taxon>
        <taxon>Oryza</taxon>
        <taxon>Oryza sativa</taxon>
    </lineage>
</organism>
<gene>
    <name evidence="6" type="primary">AP2-2</name>
    <name evidence="7" type="ORF">OsI_14083</name>
</gene>
<reference key="1">
    <citation type="journal article" date="2005" name="PLoS Biol.">
        <title>The genomes of Oryza sativa: a history of duplications.</title>
        <authorList>
            <person name="Yu J."/>
            <person name="Wang J."/>
            <person name="Lin W."/>
            <person name="Li S."/>
            <person name="Li H."/>
            <person name="Zhou J."/>
            <person name="Ni P."/>
            <person name="Dong W."/>
            <person name="Hu S."/>
            <person name="Zeng C."/>
            <person name="Zhang J."/>
            <person name="Zhang Y."/>
            <person name="Li R."/>
            <person name="Xu Z."/>
            <person name="Li S."/>
            <person name="Li X."/>
            <person name="Zheng H."/>
            <person name="Cong L."/>
            <person name="Lin L."/>
            <person name="Yin J."/>
            <person name="Geng J."/>
            <person name="Li G."/>
            <person name="Shi J."/>
            <person name="Liu J."/>
            <person name="Lv H."/>
            <person name="Li J."/>
            <person name="Wang J."/>
            <person name="Deng Y."/>
            <person name="Ran L."/>
            <person name="Shi X."/>
            <person name="Wang X."/>
            <person name="Wu Q."/>
            <person name="Li C."/>
            <person name="Ren X."/>
            <person name="Wang J."/>
            <person name="Wang X."/>
            <person name="Li D."/>
            <person name="Liu D."/>
            <person name="Zhang X."/>
            <person name="Ji Z."/>
            <person name="Zhao W."/>
            <person name="Sun Y."/>
            <person name="Zhang Z."/>
            <person name="Bao J."/>
            <person name="Han Y."/>
            <person name="Dong L."/>
            <person name="Ji J."/>
            <person name="Chen P."/>
            <person name="Wu S."/>
            <person name="Liu J."/>
            <person name="Xiao Y."/>
            <person name="Bu D."/>
            <person name="Tan J."/>
            <person name="Yang L."/>
            <person name="Ye C."/>
            <person name="Zhang J."/>
            <person name="Xu J."/>
            <person name="Zhou Y."/>
            <person name="Yu Y."/>
            <person name="Zhang B."/>
            <person name="Zhuang S."/>
            <person name="Wei H."/>
            <person name="Liu B."/>
            <person name="Lei M."/>
            <person name="Yu H."/>
            <person name="Li Y."/>
            <person name="Xu H."/>
            <person name="Wei S."/>
            <person name="He X."/>
            <person name="Fang L."/>
            <person name="Zhang Z."/>
            <person name="Zhang Y."/>
            <person name="Huang X."/>
            <person name="Su Z."/>
            <person name="Tong W."/>
            <person name="Li J."/>
            <person name="Tong Z."/>
            <person name="Li S."/>
            <person name="Ye J."/>
            <person name="Wang L."/>
            <person name="Fang L."/>
            <person name="Lei T."/>
            <person name="Chen C.-S."/>
            <person name="Chen H.-C."/>
            <person name="Xu Z."/>
            <person name="Li H."/>
            <person name="Huang H."/>
            <person name="Zhang F."/>
            <person name="Xu H."/>
            <person name="Li N."/>
            <person name="Zhao C."/>
            <person name="Li S."/>
            <person name="Dong L."/>
            <person name="Huang Y."/>
            <person name="Li L."/>
            <person name="Xi Y."/>
            <person name="Qi Q."/>
            <person name="Li W."/>
            <person name="Zhang B."/>
            <person name="Hu W."/>
            <person name="Zhang Y."/>
            <person name="Tian X."/>
            <person name="Jiao Y."/>
            <person name="Liang X."/>
            <person name="Jin J."/>
            <person name="Gao L."/>
            <person name="Zheng W."/>
            <person name="Hao B."/>
            <person name="Liu S.-M."/>
            <person name="Wang W."/>
            <person name="Yuan L."/>
            <person name="Cao M."/>
            <person name="McDermott J."/>
            <person name="Samudrala R."/>
            <person name="Wang J."/>
            <person name="Wong G.K.-S."/>
            <person name="Yang H."/>
        </authorList>
    </citation>
    <scope>NUCLEOTIDE SEQUENCE [LARGE SCALE GENOMIC DNA]</scope>
    <source>
        <strain>cv. 93-11</strain>
    </source>
</reference>
<name>AP22_ORYSI</name>
<sequence length="434" mass="47293">MLLDLNVESPERSGTSSSSVLNSGDAGGGGGGGGGGGLFRFDLLASSPDDDECSGEQHQLPAASGIVTRQLLPPPPPAAPSPAPAWQPPRRAAEDAALAQRPVVAKKTRRGPRSRSSQYRGVTFYRRTGRWESHIWDCGKQVYLGGFDTAHAAARAYDRAAIKFRGLEADINFNLSDYEDDLKQMRNWTKEEFVHILRRQSTGFARGSSKFRGVTLHKCGRWEARMGQLLGKKYIYLGLFDTEVEAARAYDRAAIRFNGREAVTNFEPASYNVDALPDAGNEAIVDGDLDLDLRISQPNARDSKSDVATTGLQLTCDSPESSNITVHQPMGSSPQWTVHHQSTPLPPQHQRLYPSHCLGFLPNLQERPMDRRLELGPMPFPTQAWQMQAPSHLPLLHAAASSGFSAGAGAGVAAATRRQPPFPADHPFYFPPTA</sequence>
<keyword id="KW-0238">DNA-binding</keyword>
<keyword id="KW-0539">Nucleus</keyword>
<keyword id="KW-1185">Reference proteome</keyword>
<keyword id="KW-0677">Repeat</keyword>
<keyword id="KW-0804">Transcription</keyword>
<keyword id="KW-0805">Transcription regulation</keyword>
<proteinExistence type="inferred from homology"/>
<accession>B8AMA9</accession>
<evidence type="ECO:0000250" key="1">
    <source>
        <dbReference type="UniProtKB" id="P47927"/>
    </source>
</evidence>
<evidence type="ECO:0000250" key="2">
    <source>
        <dbReference type="UniProtKB" id="Q84TB5"/>
    </source>
</evidence>
<evidence type="ECO:0000255" key="3"/>
<evidence type="ECO:0000255" key="4">
    <source>
        <dbReference type="PROSITE-ProRule" id="PRU00366"/>
    </source>
</evidence>
<evidence type="ECO:0000256" key="5">
    <source>
        <dbReference type="SAM" id="MobiDB-lite"/>
    </source>
</evidence>
<evidence type="ECO:0000305" key="6"/>
<evidence type="ECO:0000312" key="7">
    <source>
        <dbReference type="EMBL" id="EEC76419.1"/>
    </source>
</evidence>
<comment type="function">
    <text evidence="1 2">Probable transcription factor (By similarity). Involved in spikelet transition. Together with SNB, controls synergistically inflorescence architecture and floral meristem establishment via the regulation of spatio-temporal expression of B- and E-function floral organ identity genes in the lodicules and of spikelet meristem genes. Prevents lemma and palea elongation as well as grain growth (By similarity).</text>
</comment>
<comment type="subunit">
    <text evidence="1 2">May form homodimer (By similarity). Interacts with TPR2/ASP1 (By similarity).</text>
</comment>
<comment type="subcellular location">
    <subcellularLocation>
        <location evidence="4">Nucleus</location>
    </subcellularLocation>
</comment>
<comment type="similarity">
    <text evidence="6">Belongs to the AP2/ERF transcription factor family. AP2 subfamily.</text>
</comment>